<gene>
    <name evidence="5" type="primary">KCS3</name>
    <name evidence="7" type="ordered locus">At1g07720</name>
    <name evidence="8" type="ORF">F24B9.18</name>
</gene>
<dbReference type="EC" id="2.3.1.199" evidence="6"/>
<dbReference type="EMBL" id="AC007583">
    <property type="protein sequence ID" value="AAF75082.1"/>
    <property type="molecule type" value="Genomic_DNA"/>
</dbReference>
<dbReference type="EMBL" id="CP002684">
    <property type="protein sequence ID" value="AEE28169.1"/>
    <property type="molecule type" value="Genomic_DNA"/>
</dbReference>
<dbReference type="EMBL" id="AF428349">
    <property type="protein sequence ID" value="AAL16279.1"/>
    <property type="molecule type" value="mRNA"/>
</dbReference>
<dbReference type="EMBL" id="AY062700">
    <property type="protein sequence ID" value="AAL32778.1"/>
    <property type="molecule type" value="mRNA"/>
</dbReference>
<dbReference type="EMBL" id="AY128794">
    <property type="protein sequence ID" value="AAM91194.1"/>
    <property type="molecule type" value="mRNA"/>
</dbReference>
<dbReference type="PIR" id="D86212">
    <property type="entry name" value="D86212"/>
</dbReference>
<dbReference type="RefSeq" id="NP_172251.1">
    <property type="nucleotide sequence ID" value="NM_100646.3"/>
</dbReference>
<dbReference type="SMR" id="Q9LQP8"/>
<dbReference type="FunCoup" id="Q9LQP8">
    <property type="interactions" value="297"/>
</dbReference>
<dbReference type="STRING" id="3702.Q9LQP8"/>
<dbReference type="iPTMnet" id="Q9LQP8"/>
<dbReference type="PaxDb" id="3702-AT1G07720.1"/>
<dbReference type="ProteomicsDB" id="230176"/>
<dbReference type="EnsemblPlants" id="AT1G07720.1">
    <property type="protein sequence ID" value="AT1G07720.1"/>
    <property type="gene ID" value="AT1G07720"/>
</dbReference>
<dbReference type="GeneID" id="837286"/>
<dbReference type="Gramene" id="AT1G07720.1">
    <property type="protein sequence ID" value="AT1G07720.1"/>
    <property type="gene ID" value="AT1G07720"/>
</dbReference>
<dbReference type="KEGG" id="ath:AT1G07720"/>
<dbReference type="Araport" id="AT1G07720"/>
<dbReference type="TAIR" id="AT1G07720">
    <property type="gene designation" value="KCS3"/>
</dbReference>
<dbReference type="eggNOG" id="ENOG502QPV6">
    <property type="taxonomic scope" value="Eukaryota"/>
</dbReference>
<dbReference type="HOGENOM" id="CLU_013238_3_1_1"/>
<dbReference type="InParanoid" id="Q9LQP8"/>
<dbReference type="UniPathway" id="UPA00094"/>
<dbReference type="PRO" id="PR:Q9LQP8"/>
<dbReference type="Proteomes" id="UP000006548">
    <property type="component" value="Chromosome 1"/>
</dbReference>
<dbReference type="ExpressionAtlas" id="Q9LQP8">
    <property type="expression patterns" value="baseline and differential"/>
</dbReference>
<dbReference type="GO" id="GO:0005783">
    <property type="term" value="C:endoplasmic reticulum"/>
    <property type="evidence" value="ECO:0000314"/>
    <property type="project" value="TAIR"/>
</dbReference>
<dbReference type="GO" id="GO:0016020">
    <property type="term" value="C:membrane"/>
    <property type="evidence" value="ECO:0007669"/>
    <property type="project" value="InterPro"/>
</dbReference>
<dbReference type="GO" id="GO:0009922">
    <property type="term" value="F:fatty acid elongase activity"/>
    <property type="evidence" value="ECO:0007669"/>
    <property type="project" value="UniProtKB-EC"/>
</dbReference>
<dbReference type="GO" id="GO:0006633">
    <property type="term" value="P:fatty acid biosynthetic process"/>
    <property type="evidence" value="ECO:0007669"/>
    <property type="project" value="UniProtKB-UniPathway"/>
</dbReference>
<dbReference type="GO" id="GO:0009409">
    <property type="term" value="P:response to cold"/>
    <property type="evidence" value="ECO:0000270"/>
    <property type="project" value="TAIR"/>
</dbReference>
<dbReference type="GO" id="GO:0009416">
    <property type="term" value="P:response to light stimulus"/>
    <property type="evidence" value="ECO:0000270"/>
    <property type="project" value="TAIR"/>
</dbReference>
<dbReference type="CDD" id="cd00831">
    <property type="entry name" value="CHS_like"/>
    <property type="match status" value="1"/>
</dbReference>
<dbReference type="Gene3D" id="3.40.47.10">
    <property type="match status" value="1"/>
</dbReference>
<dbReference type="InterPro" id="IPR012392">
    <property type="entry name" value="3-ktacl-CoA_syn"/>
</dbReference>
<dbReference type="InterPro" id="IPR013747">
    <property type="entry name" value="ACP_syn_III_C"/>
</dbReference>
<dbReference type="InterPro" id="IPR013601">
    <property type="entry name" value="FAE1_typ3_polyketide_synth"/>
</dbReference>
<dbReference type="InterPro" id="IPR016039">
    <property type="entry name" value="Thiolase-like"/>
</dbReference>
<dbReference type="PANTHER" id="PTHR31561">
    <property type="entry name" value="3-KETOACYL-COA SYNTHASE"/>
    <property type="match status" value="1"/>
</dbReference>
<dbReference type="Pfam" id="PF08541">
    <property type="entry name" value="ACP_syn_III_C"/>
    <property type="match status" value="1"/>
</dbReference>
<dbReference type="Pfam" id="PF08392">
    <property type="entry name" value="FAE1_CUT1_RppA"/>
    <property type="match status" value="1"/>
</dbReference>
<dbReference type="PIRSF" id="PIRSF036417">
    <property type="entry name" value="3-ktacl-CoA_syn"/>
    <property type="match status" value="1"/>
</dbReference>
<dbReference type="SUPFAM" id="SSF53901">
    <property type="entry name" value="Thiolase-like"/>
    <property type="match status" value="1"/>
</dbReference>
<comment type="catalytic activity">
    <reaction evidence="6">
        <text>a very-long-chain acyl-CoA + malonyl-CoA + H(+) = a very-long-chain 3-oxoacyl-CoA + CO2 + CoA</text>
        <dbReference type="Rhea" id="RHEA:32727"/>
        <dbReference type="ChEBI" id="CHEBI:15378"/>
        <dbReference type="ChEBI" id="CHEBI:16526"/>
        <dbReference type="ChEBI" id="CHEBI:57287"/>
        <dbReference type="ChEBI" id="CHEBI:57384"/>
        <dbReference type="ChEBI" id="CHEBI:90725"/>
        <dbReference type="ChEBI" id="CHEBI:90736"/>
        <dbReference type="EC" id="2.3.1.199"/>
    </reaction>
</comment>
<comment type="pathway">
    <text>Lipid metabolism; fatty acid biosynthesis.</text>
</comment>
<comment type="subcellular location">
    <subcellularLocation>
        <location evidence="4">Endoplasmic reticulum</location>
    </subcellularLocation>
</comment>
<comment type="tissue specificity">
    <text evidence="4">Expressed in siliques, leaves, stems and seedlings.</text>
</comment>
<comment type="induction">
    <text evidence="3 4">Repressed by herbicides such as flufenacet and benfuresate (PubMed:12916765). Down-regulated by darkness and low temperature, and up-regulated by salt, drought and osmotic stress (PubMed:18465198).</text>
</comment>
<comment type="similarity">
    <text evidence="6">Belongs to the thiolase-like superfamily. Chalcone/stilbene synthases family.</text>
</comment>
<accession>Q9LQP8</accession>
<sequence length="478" mass="54335">MDLLVMLLSLLVSYLIFKIWKRIDSKRDQNCYILDYQCHKPSDDRMVNTQFSGDIILRNKHLRLNEYKFLLKAIVSSGIGEQTYAPRLFFEGREQRPTLQDGLSEMEEFYIDTIEKVLKRNKISPSEIDILVVNVSMLNSTPSLSARIINHYKMREDIKVFNLTAMGCSASVISIDIVKNIFKTYKNKLALVVTSESLSPNWYSGNNRSMILANCLFRSGGCAVLLTNKRSLSRRAMFKLRCLVRTHHGARDDSFNACVQKEDELGHIGVHLDKTLPKAATRAFIDNLKVITPKILPVTELLRFMLCLLLKKLRSSPSKGSTNVTQAAPKAGVKAGINFKTGIDHFCIHTGGKAVIDAIGYSLDLNEYDLEPARMTLHRFGNTSASSLWYVLGYMEAKKRLKRGDRVFMISFGAGFKCNSCVWEVVRDLNVGEAVGNVWNHCINQYPPKSILNPFFEKYGWIHEEEDPDTFKMPEGFM</sequence>
<organism>
    <name type="scientific">Arabidopsis thaliana</name>
    <name type="common">Mouse-ear cress</name>
    <dbReference type="NCBI Taxonomy" id="3702"/>
    <lineage>
        <taxon>Eukaryota</taxon>
        <taxon>Viridiplantae</taxon>
        <taxon>Streptophyta</taxon>
        <taxon>Embryophyta</taxon>
        <taxon>Tracheophyta</taxon>
        <taxon>Spermatophyta</taxon>
        <taxon>Magnoliopsida</taxon>
        <taxon>eudicotyledons</taxon>
        <taxon>Gunneridae</taxon>
        <taxon>Pentapetalae</taxon>
        <taxon>rosids</taxon>
        <taxon>malvids</taxon>
        <taxon>Brassicales</taxon>
        <taxon>Brassicaceae</taxon>
        <taxon>Camelineae</taxon>
        <taxon>Arabidopsis</taxon>
    </lineage>
</organism>
<evidence type="ECO:0000250" key="1">
    <source>
        <dbReference type="UniProtKB" id="Q38860"/>
    </source>
</evidence>
<evidence type="ECO:0000255" key="2"/>
<evidence type="ECO:0000269" key="3">
    <source>
    </source>
</evidence>
<evidence type="ECO:0000269" key="4">
    <source>
    </source>
</evidence>
<evidence type="ECO:0000303" key="5">
    <source>
    </source>
</evidence>
<evidence type="ECO:0000305" key="6"/>
<evidence type="ECO:0000312" key="7">
    <source>
        <dbReference type="Araport" id="AT1G07720"/>
    </source>
</evidence>
<evidence type="ECO:0000312" key="8">
    <source>
        <dbReference type="EMBL" id="AAF75082.1"/>
    </source>
</evidence>
<reference key="1">
    <citation type="journal article" date="2000" name="Nature">
        <title>Sequence and analysis of chromosome 1 of the plant Arabidopsis thaliana.</title>
        <authorList>
            <person name="Theologis A."/>
            <person name="Ecker J.R."/>
            <person name="Palm C.J."/>
            <person name="Federspiel N.A."/>
            <person name="Kaul S."/>
            <person name="White O."/>
            <person name="Alonso J."/>
            <person name="Altafi H."/>
            <person name="Araujo R."/>
            <person name="Bowman C.L."/>
            <person name="Brooks S.Y."/>
            <person name="Buehler E."/>
            <person name="Chan A."/>
            <person name="Chao Q."/>
            <person name="Chen H."/>
            <person name="Cheuk R.F."/>
            <person name="Chin C.W."/>
            <person name="Chung M.K."/>
            <person name="Conn L."/>
            <person name="Conway A.B."/>
            <person name="Conway A.R."/>
            <person name="Creasy T.H."/>
            <person name="Dewar K."/>
            <person name="Dunn P."/>
            <person name="Etgu P."/>
            <person name="Feldblyum T.V."/>
            <person name="Feng J.-D."/>
            <person name="Fong B."/>
            <person name="Fujii C.Y."/>
            <person name="Gill J.E."/>
            <person name="Goldsmith A.D."/>
            <person name="Haas B."/>
            <person name="Hansen N.F."/>
            <person name="Hughes B."/>
            <person name="Huizar L."/>
            <person name="Hunter J.L."/>
            <person name="Jenkins J."/>
            <person name="Johnson-Hopson C."/>
            <person name="Khan S."/>
            <person name="Khaykin E."/>
            <person name="Kim C.J."/>
            <person name="Koo H.L."/>
            <person name="Kremenetskaia I."/>
            <person name="Kurtz D.B."/>
            <person name="Kwan A."/>
            <person name="Lam B."/>
            <person name="Langin-Hooper S."/>
            <person name="Lee A."/>
            <person name="Lee J.M."/>
            <person name="Lenz C.A."/>
            <person name="Li J.H."/>
            <person name="Li Y.-P."/>
            <person name="Lin X."/>
            <person name="Liu S.X."/>
            <person name="Liu Z.A."/>
            <person name="Luros J.S."/>
            <person name="Maiti R."/>
            <person name="Marziali A."/>
            <person name="Militscher J."/>
            <person name="Miranda M."/>
            <person name="Nguyen M."/>
            <person name="Nierman W.C."/>
            <person name="Osborne B.I."/>
            <person name="Pai G."/>
            <person name="Peterson J."/>
            <person name="Pham P.K."/>
            <person name="Rizzo M."/>
            <person name="Rooney T."/>
            <person name="Rowley D."/>
            <person name="Sakano H."/>
            <person name="Salzberg S.L."/>
            <person name="Schwartz J.R."/>
            <person name="Shinn P."/>
            <person name="Southwick A.M."/>
            <person name="Sun H."/>
            <person name="Tallon L.J."/>
            <person name="Tambunga G."/>
            <person name="Toriumi M.J."/>
            <person name="Town C.D."/>
            <person name="Utterback T."/>
            <person name="Van Aken S."/>
            <person name="Vaysberg M."/>
            <person name="Vysotskaia V.S."/>
            <person name="Walker M."/>
            <person name="Wu D."/>
            <person name="Yu G."/>
            <person name="Fraser C.M."/>
            <person name="Venter J.C."/>
            <person name="Davis R.W."/>
        </authorList>
    </citation>
    <scope>NUCLEOTIDE SEQUENCE [LARGE SCALE GENOMIC DNA]</scope>
    <source>
        <strain>cv. Columbia</strain>
    </source>
</reference>
<reference key="2">
    <citation type="journal article" date="2017" name="Plant J.">
        <title>Araport11: a complete reannotation of the Arabidopsis thaliana reference genome.</title>
        <authorList>
            <person name="Cheng C.Y."/>
            <person name="Krishnakumar V."/>
            <person name="Chan A.P."/>
            <person name="Thibaud-Nissen F."/>
            <person name="Schobel S."/>
            <person name="Town C.D."/>
        </authorList>
    </citation>
    <scope>GENOME REANNOTATION</scope>
    <source>
        <strain>cv. Columbia</strain>
    </source>
</reference>
<reference key="3">
    <citation type="journal article" date="2003" name="Science">
        <title>Empirical analysis of transcriptional activity in the Arabidopsis genome.</title>
        <authorList>
            <person name="Yamada K."/>
            <person name="Lim J."/>
            <person name="Dale J.M."/>
            <person name="Chen H."/>
            <person name="Shinn P."/>
            <person name="Palm C.J."/>
            <person name="Southwick A.M."/>
            <person name="Wu H.C."/>
            <person name="Kim C.J."/>
            <person name="Nguyen M."/>
            <person name="Pham P.K."/>
            <person name="Cheuk R.F."/>
            <person name="Karlin-Newmann G."/>
            <person name="Liu S.X."/>
            <person name="Lam B."/>
            <person name="Sakano H."/>
            <person name="Wu T."/>
            <person name="Yu G."/>
            <person name="Miranda M."/>
            <person name="Quach H.L."/>
            <person name="Tripp M."/>
            <person name="Chang C.H."/>
            <person name="Lee J.M."/>
            <person name="Toriumi M.J."/>
            <person name="Chan M.M."/>
            <person name="Tang C.C."/>
            <person name="Onodera C.S."/>
            <person name="Deng J.M."/>
            <person name="Akiyama K."/>
            <person name="Ansari Y."/>
            <person name="Arakawa T."/>
            <person name="Banh J."/>
            <person name="Banno F."/>
            <person name="Bowser L."/>
            <person name="Brooks S.Y."/>
            <person name="Carninci P."/>
            <person name="Chao Q."/>
            <person name="Choy N."/>
            <person name="Enju A."/>
            <person name="Goldsmith A.D."/>
            <person name="Gurjal M."/>
            <person name="Hansen N.F."/>
            <person name="Hayashizaki Y."/>
            <person name="Johnson-Hopson C."/>
            <person name="Hsuan V.W."/>
            <person name="Iida K."/>
            <person name="Karnes M."/>
            <person name="Khan S."/>
            <person name="Koesema E."/>
            <person name="Ishida J."/>
            <person name="Jiang P.X."/>
            <person name="Jones T."/>
            <person name="Kawai J."/>
            <person name="Kamiya A."/>
            <person name="Meyers C."/>
            <person name="Nakajima M."/>
            <person name="Narusaka M."/>
            <person name="Seki M."/>
            <person name="Sakurai T."/>
            <person name="Satou M."/>
            <person name="Tamse R."/>
            <person name="Vaysberg M."/>
            <person name="Wallender E.K."/>
            <person name="Wong C."/>
            <person name="Yamamura Y."/>
            <person name="Yuan S."/>
            <person name="Shinozaki K."/>
            <person name="Davis R.W."/>
            <person name="Theologis A."/>
            <person name="Ecker J.R."/>
        </authorList>
    </citation>
    <scope>NUCLEOTIDE SEQUENCE [LARGE SCALE MRNA]</scope>
    <source>
        <strain>cv. Columbia</strain>
    </source>
</reference>
<reference key="4">
    <citation type="journal article" date="2003" name="Pest Manag. Sci.">
        <title>Flufenacet herbicide treatment phenocopies the fiddlehead mutant in Arabidopsis thaliana.</title>
        <authorList>
            <person name="Lechelt-Kunze C."/>
            <person name="Meissner R.C."/>
            <person name="Drewes M."/>
            <person name="Tietjen K."/>
        </authorList>
    </citation>
    <scope>INDUCTION</scope>
    <scope>GENE FAMILY</scope>
</reference>
<reference key="5">
    <citation type="journal article" date="2008" name="Plant Mol. Biol.">
        <title>The VLCFA elongase gene family in Arabidopsis thaliana: phylogenetic analysis, 3D modelling and expression profiling.</title>
        <authorList>
            <person name="Joubes J."/>
            <person name="Raffaele S."/>
            <person name="Bourdenx B."/>
            <person name="Garcia C."/>
            <person name="Laroche-Traineau J."/>
            <person name="Moreau P."/>
            <person name="Domergue F."/>
            <person name="Lessire R."/>
        </authorList>
    </citation>
    <scope>GENE FAMILY</scope>
    <scope>NOMENCLATURE</scope>
    <scope>3D-STRUCTURE MODELING</scope>
    <scope>SUBCELLULAR LOCATION</scope>
    <scope>TISSUE SPECIFICITY</scope>
    <scope>INDUCTION</scope>
</reference>
<feature type="signal peptide" evidence="2">
    <location>
        <begin position="1"/>
        <end position="25"/>
    </location>
</feature>
<feature type="chain" id="PRO_0000249095" description="3-ketoacyl-CoA synthase 3">
    <location>
        <begin position="26"/>
        <end position="478"/>
    </location>
</feature>
<feature type="domain" description="FAE" evidence="2">
    <location>
        <begin position="26"/>
        <end position="313"/>
    </location>
</feature>
<feature type="active site" evidence="1">
    <location>
        <position position="168"/>
    </location>
</feature>
<feature type="active site" evidence="1">
    <location>
        <position position="247"/>
    </location>
</feature>
<feature type="active site" evidence="1">
    <location>
        <position position="345"/>
    </location>
</feature>
<feature type="active site" evidence="1">
    <location>
        <position position="349"/>
    </location>
</feature>
<feature type="active site" evidence="1">
    <location>
        <position position="378"/>
    </location>
</feature>
<feature type="active site" evidence="1">
    <location>
        <position position="382"/>
    </location>
</feature>
<name>KCS3_ARATH</name>
<keyword id="KW-0012">Acyltransferase</keyword>
<keyword id="KW-0256">Endoplasmic reticulum</keyword>
<keyword id="KW-1185">Reference proteome</keyword>
<keyword id="KW-0732">Signal</keyword>
<keyword id="KW-0808">Transferase</keyword>
<protein>
    <recommendedName>
        <fullName evidence="5">3-ketoacyl-CoA synthase 3</fullName>
        <shortName evidence="5">KCS-3</shortName>
        <ecNumber evidence="6">2.3.1.199</ecNumber>
    </recommendedName>
    <alternativeName>
        <fullName evidence="5">Very long-chain fatty acid condensing enzyme 3</fullName>
        <shortName evidence="5">VLCFA condensing enzyme 3</shortName>
    </alternativeName>
</protein>
<proteinExistence type="evidence at transcript level"/>